<keyword id="KW-1283">Bacterial microcompartment</keyword>
<keyword id="KW-0113">Calvin cycle</keyword>
<keyword id="KW-0120">Carbon dioxide fixation</keyword>
<keyword id="KW-1282">Carboxysome</keyword>
<keyword id="KW-1015">Disulfide bond</keyword>
<keyword id="KW-0456">Lyase</keyword>
<keyword id="KW-0460">Magnesium</keyword>
<keyword id="KW-0479">Metal-binding</keyword>
<keyword id="KW-0503">Monooxygenase</keyword>
<keyword id="KW-0560">Oxidoreductase</keyword>
<keyword id="KW-0601">Photorespiration</keyword>
<keyword id="KW-0602">Photosynthesis</keyword>
<keyword id="KW-1185">Reference proteome</keyword>
<evidence type="ECO:0000255" key="1">
    <source>
        <dbReference type="HAMAP-Rule" id="MF_01338"/>
    </source>
</evidence>
<comment type="function">
    <text evidence="1">RuBisCO catalyzes two reactions: the carboxylation of D-ribulose 1,5-bisphosphate, the primary event in carbon dioxide fixation, as well as the oxidative fragmentation of the pentose substrate in the photorespiration process. Both reactions occur simultaneously and in competition at the same active site.</text>
</comment>
<comment type="catalytic activity">
    <reaction evidence="1">
        <text>2 (2R)-3-phosphoglycerate + 2 H(+) = D-ribulose 1,5-bisphosphate + CO2 + H2O</text>
        <dbReference type="Rhea" id="RHEA:23124"/>
        <dbReference type="ChEBI" id="CHEBI:15377"/>
        <dbReference type="ChEBI" id="CHEBI:15378"/>
        <dbReference type="ChEBI" id="CHEBI:16526"/>
        <dbReference type="ChEBI" id="CHEBI:57870"/>
        <dbReference type="ChEBI" id="CHEBI:58272"/>
        <dbReference type="EC" id="4.1.1.39"/>
    </reaction>
</comment>
<comment type="catalytic activity">
    <reaction evidence="1">
        <text>D-ribulose 1,5-bisphosphate + O2 = 2-phosphoglycolate + (2R)-3-phosphoglycerate + 2 H(+)</text>
        <dbReference type="Rhea" id="RHEA:36631"/>
        <dbReference type="ChEBI" id="CHEBI:15378"/>
        <dbReference type="ChEBI" id="CHEBI:15379"/>
        <dbReference type="ChEBI" id="CHEBI:57870"/>
        <dbReference type="ChEBI" id="CHEBI:58033"/>
        <dbReference type="ChEBI" id="CHEBI:58272"/>
    </reaction>
</comment>
<comment type="cofactor">
    <cofactor evidence="1">
        <name>Mg(2+)</name>
        <dbReference type="ChEBI" id="CHEBI:18420"/>
    </cofactor>
    <text evidence="1">Binds 1 Mg(2+) ion per subunit.</text>
</comment>
<comment type="subunit">
    <text evidence="1">Heterohexadecamer of 8 large chains and 8 small chains; disulfide-linked. The disulfide link is formed within the large subunit homodimers.</text>
</comment>
<comment type="subcellular location">
    <subcellularLocation>
        <location evidence="1">Carboxysome</location>
    </subcellularLocation>
</comment>
<comment type="PTM">
    <text evidence="1">The disulfide bond which can form in the large chain dimeric partners within the hexadecamer appears to be associated with oxidative stress and protein turnover.</text>
</comment>
<comment type="miscellaneous">
    <text evidence="1">The basic functional RuBisCO is composed of a large chain homodimer in a 'head-to-tail' conformation. In form I RuBisCO this homodimer is arranged in a barrel-like tetramer with the small subunits forming a tetrameric 'cap' on each end of the 'barrel'.</text>
</comment>
<comment type="similarity">
    <text evidence="1">Belongs to the RuBisCO large chain family. Type I subfamily.</text>
</comment>
<gene>
    <name evidence="1" type="primary">cbbL</name>
    <name evidence="1" type="synonym">rbcL</name>
    <name type="ordered locus">glr2156</name>
</gene>
<organism>
    <name type="scientific">Gloeobacter violaceus (strain ATCC 29082 / PCC 7421)</name>
    <dbReference type="NCBI Taxonomy" id="251221"/>
    <lineage>
        <taxon>Bacteria</taxon>
        <taxon>Bacillati</taxon>
        <taxon>Cyanobacteriota</taxon>
        <taxon>Cyanophyceae</taxon>
        <taxon>Gloeobacterales</taxon>
        <taxon>Gloeobacteraceae</taxon>
        <taxon>Gloeobacter</taxon>
    </lineage>
</organism>
<feature type="chain" id="PRO_0000062623" description="Ribulose bisphosphate carboxylase large chain">
    <location>
        <begin position="1"/>
        <end position="474"/>
    </location>
</feature>
<feature type="active site" description="Proton acceptor" evidence="1">
    <location>
        <position position="174"/>
    </location>
</feature>
<feature type="active site" description="Proton acceptor" evidence="1">
    <location>
        <position position="293"/>
    </location>
</feature>
<feature type="binding site" description="in homodimeric partner" evidence="1">
    <location>
        <position position="122"/>
    </location>
    <ligand>
        <name>substrate</name>
    </ligand>
</feature>
<feature type="binding site" evidence="1">
    <location>
        <position position="172"/>
    </location>
    <ligand>
        <name>substrate</name>
    </ligand>
</feature>
<feature type="binding site" evidence="1">
    <location>
        <position position="176"/>
    </location>
    <ligand>
        <name>substrate</name>
    </ligand>
</feature>
<feature type="binding site" description="via carbamate group" evidence="1">
    <location>
        <position position="200"/>
    </location>
    <ligand>
        <name>Mg(2+)</name>
        <dbReference type="ChEBI" id="CHEBI:18420"/>
    </ligand>
</feature>
<feature type="binding site" evidence="1">
    <location>
        <position position="202"/>
    </location>
    <ligand>
        <name>Mg(2+)</name>
        <dbReference type="ChEBI" id="CHEBI:18420"/>
    </ligand>
</feature>
<feature type="binding site" evidence="1">
    <location>
        <position position="203"/>
    </location>
    <ligand>
        <name>Mg(2+)</name>
        <dbReference type="ChEBI" id="CHEBI:18420"/>
    </ligand>
</feature>
<feature type="binding site" evidence="1">
    <location>
        <position position="294"/>
    </location>
    <ligand>
        <name>substrate</name>
    </ligand>
</feature>
<feature type="binding site" evidence="1">
    <location>
        <position position="326"/>
    </location>
    <ligand>
        <name>substrate</name>
    </ligand>
</feature>
<feature type="binding site" evidence="1">
    <location>
        <position position="378"/>
    </location>
    <ligand>
        <name>substrate</name>
    </ligand>
</feature>
<feature type="site" description="Transition state stabilizer" evidence="1">
    <location>
        <position position="333"/>
    </location>
</feature>
<feature type="modified residue" description="N6-carboxylysine" evidence="1">
    <location>
        <position position="200"/>
    </location>
</feature>
<feature type="disulfide bond" description="Interchain; in linked form" evidence="1">
    <location>
        <position position="246"/>
    </location>
</feature>
<dbReference type="EC" id="4.1.1.39" evidence="1"/>
<dbReference type="EMBL" id="BA000045">
    <property type="protein sequence ID" value="BAC90097.1"/>
    <property type="molecule type" value="Genomic_DNA"/>
</dbReference>
<dbReference type="RefSeq" id="NP_925102.1">
    <property type="nucleotide sequence ID" value="NC_005125.1"/>
</dbReference>
<dbReference type="RefSeq" id="WP_011142153.1">
    <property type="nucleotide sequence ID" value="NC_005125.1"/>
</dbReference>
<dbReference type="SMR" id="Q7NIM7"/>
<dbReference type="STRING" id="251221.gene:10759651"/>
<dbReference type="EnsemblBacteria" id="BAC90097">
    <property type="protein sequence ID" value="BAC90097"/>
    <property type="gene ID" value="BAC90097"/>
</dbReference>
<dbReference type="KEGG" id="gvi:glr2156"/>
<dbReference type="PATRIC" id="fig|251221.4.peg.2190"/>
<dbReference type="eggNOG" id="COG1850">
    <property type="taxonomic scope" value="Bacteria"/>
</dbReference>
<dbReference type="HOGENOM" id="CLU_031450_2_0_3"/>
<dbReference type="InParanoid" id="Q7NIM7"/>
<dbReference type="OrthoDB" id="9770811at2"/>
<dbReference type="PhylomeDB" id="Q7NIM7"/>
<dbReference type="Proteomes" id="UP000000557">
    <property type="component" value="Chromosome"/>
</dbReference>
<dbReference type="GO" id="GO:0031470">
    <property type="term" value="C:carboxysome"/>
    <property type="evidence" value="ECO:0007669"/>
    <property type="project" value="UniProtKB-SubCell"/>
</dbReference>
<dbReference type="GO" id="GO:0000287">
    <property type="term" value="F:magnesium ion binding"/>
    <property type="evidence" value="ECO:0007669"/>
    <property type="project" value="UniProtKB-UniRule"/>
</dbReference>
<dbReference type="GO" id="GO:0004497">
    <property type="term" value="F:monooxygenase activity"/>
    <property type="evidence" value="ECO:0007669"/>
    <property type="project" value="UniProtKB-KW"/>
</dbReference>
<dbReference type="GO" id="GO:0016984">
    <property type="term" value="F:ribulose-bisphosphate carboxylase activity"/>
    <property type="evidence" value="ECO:0007669"/>
    <property type="project" value="UniProtKB-UniRule"/>
</dbReference>
<dbReference type="GO" id="GO:0009853">
    <property type="term" value="P:photorespiration"/>
    <property type="evidence" value="ECO:0007669"/>
    <property type="project" value="UniProtKB-KW"/>
</dbReference>
<dbReference type="GO" id="GO:0019253">
    <property type="term" value="P:reductive pentose-phosphate cycle"/>
    <property type="evidence" value="ECO:0007669"/>
    <property type="project" value="UniProtKB-UniRule"/>
</dbReference>
<dbReference type="CDD" id="cd08212">
    <property type="entry name" value="RuBisCO_large_I"/>
    <property type="match status" value="1"/>
</dbReference>
<dbReference type="Gene3D" id="3.20.20.110">
    <property type="entry name" value="Ribulose bisphosphate carboxylase, large subunit, C-terminal domain"/>
    <property type="match status" value="1"/>
</dbReference>
<dbReference type="Gene3D" id="3.30.70.150">
    <property type="entry name" value="RuBisCO large subunit, N-terminal domain"/>
    <property type="match status" value="1"/>
</dbReference>
<dbReference type="HAMAP" id="MF_01338">
    <property type="entry name" value="RuBisCO_L_type1"/>
    <property type="match status" value="1"/>
</dbReference>
<dbReference type="InterPro" id="IPR033966">
    <property type="entry name" value="RuBisCO"/>
</dbReference>
<dbReference type="InterPro" id="IPR020878">
    <property type="entry name" value="RuBisCo_large_chain_AS"/>
</dbReference>
<dbReference type="InterPro" id="IPR000685">
    <property type="entry name" value="RuBisCO_lsu_C"/>
</dbReference>
<dbReference type="InterPro" id="IPR036376">
    <property type="entry name" value="RuBisCO_lsu_C_sf"/>
</dbReference>
<dbReference type="InterPro" id="IPR017443">
    <property type="entry name" value="RuBisCO_lsu_fd_N"/>
</dbReference>
<dbReference type="InterPro" id="IPR036422">
    <property type="entry name" value="RuBisCO_lsu_N_sf"/>
</dbReference>
<dbReference type="InterPro" id="IPR020888">
    <property type="entry name" value="RuBisCO_lsuI"/>
</dbReference>
<dbReference type="NCBIfam" id="NF003252">
    <property type="entry name" value="PRK04208.1"/>
    <property type="match status" value="1"/>
</dbReference>
<dbReference type="PANTHER" id="PTHR42704">
    <property type="entry name" value="RIBULOSE BISPHOSPHATE CARBOXYLASE"/>
    <property type="match status" value="1"/>
</dbReference>
<dbReference type="PANTHER" id="PTHR42704:SF17">
    <property type="entry name" value="RIBULOSE BISPHOSPHATE CARBOXYLASE LARGE CHAIN"/>
    <property type="match status" value="1"/>
</dbReference>
<dbReference type="Pfam" id="PF00016">
    <property type="entry name" value="RuBisCO_large"/>
    <property type="match status" value="1"/>
</dbReference>
<dbReference type="Pfam" id="PF02788">
    <property type="entry name" value="RuBisCO_large_N"/>
    <property type="match status" value="1"/>
</dbReference>
<dbReference type="SFLD" id="SFLDG01052">
    <property type="entry name" value="RuBisCO"/>
    <property type="match status" value="1"/>
</dbReference>
<dbReference type="SFLD" id="SFLDS00014">
    <property type="entry name" value="RuBisCO"/>
    <property type="match status" value="1"/>
</dbReference>
<dbReference type="SFLD" id="SFLDG00301">
    <property type="entry name" value="RuBisCO-like_proteins"/>
    <property type="match status" value="1"/>
</dbReference>
<dbReference type="SUPFAM" id="SSF51649">
    <property type="entry name" value="RuBisCo, C-terminal domain"/>
    <property type="match status" value="1"/>
</dbReference>
<dbReference type="SUPFAM" id="SSF54966">
    <property type="entry name" value="RuBisCO, large subunit, small (N-terminal) domain"/>
    <property type="match status" value="1"/>
</dbReference>
<dbReference type="PROSITE" id="PS00157">
    <property type="entry name" value="RUBISCO_LARGE"/>
    <property type="match status" value="1"/>
</dbReference>
<protein>
    <recommendedName>
        <fullName evidence="1">Ribulose bisphosphate carboxylase large chain</fullName>
        <shortName evidence="1">RuBisCO large subunit</shortName>
        <ecNumber evidence="1">4.1.1.39</ecNumber>
    </recommendedName>
</protein>
<name>RBL_GLOVI</name>
<accession>Q7NIM7</accession>
<reference key="1">
    <citation type="journal article" date="2003" name="DNA Res.">
        <title>Complete genome structure of Gloeobacter violaceus PCC 7421, a cyanobacterium that lacks thylakoids.</title>
        <authorList>
            <person name="Nakamura Y."/>
            <person name="Kaneko T."/>
            <person name="Sato S."/>
            <person name="Mimuro M."/>
            <person name="Miyashita H."/>
            <person name="Tsuchiya T."/>
            <person name="Sasamoto S."/>
            <person name="Watanabe A."/>
            <person name="Kawashima K."/>
            <person name="Kishida Y."/>
            <person name="Kiyokawa C."/>
            <person name="Kohara M."/>
            <person name="Matsumoto M."/>
            <person name="Matsuno A."/>
            <person name="Nakazaki N."/>
            <person name="Shimpo S."/>
            <person name="Takeuchi C."/>
            <person name="Yamada M."/>
            <person name="Tabata S."/>
        </authorList>
    </citation>
    <scope>NUCLEOTIDE SEQUENCE [LARGE SCALE GENOMIC DNA]</scope>
    <source>
        <strain>ATCC 29082 / PCC 7421</strain>
    </source>
</reference>
<proteinExistence type="inferred from homology"/>
<sequence length="474" mass="52855">MSYTKTQAKAGYQAGVKDYRLTYYTPDYTPKDTDVLAAFRVTPQPGVPIEEAGAAVAAESSTGTWTTVWTDGLTELDRYKGRCYDIEPVPGEDNQWICYIAYPLDLFEEGSVTNVLTSLVGNVFGFKALRALRLEDIRFPIALVKTYQGPPHGIVVERDKINKYGRPLLGCTIKPKLGLSAKNYGRAVYECLRGGLDFTKDDENINSQPFMRWRDRFLFVQDAIVKSQAETGEIKGHYLNCTAGTCEEMMERAEFAKELKTPIIMHDYLTGGFTANTTLAKWCRRNGILLHIHRAMHAVIDRQKNHGIHFRVLAKCLRLSGGDHIHTGTVVGKLEGERASTMGFVDLLREEHVERDLSRGIYFTQDWASMPGVMAVASGGIHVWHMPALLDIFGDDAVLQFGGGTLGHPWGNAPGATANRVALEACVKARNEGRDLMREAGDIIREAARWSPELAAACELWKEIKFEYEAVDKL</sequence>